<comment type="function">
    <text evidence="1">The UvrABC repair system catalyzes the recognition and processing of DNA lesions. UvrC both incises the 5' and 3' sides of the lesion. The N-terminal half is responsible for the 3' incision and the C-terminal half is responsible for the 5' incision.</text>
</comment>
<comment type="subunit">
    <text evidence="1">Interacts with UvrB in an incision complex.</text>
</comment>
<comment type="subcellular location">
    <subcellularLocation>
        <location evidence="1">Cytoplasm</location>
    </subcellularLocation>
</comment>
<comment type="similarity">
    <text evidence="1">Belongs to the UvrC family.</text>
</comment>
<name>UVRC_PSEFS</name>
<proteinExistence type="inferred from homology"/>
<evidence type="ECO:0000255" key="1">
    <source>
        <dbReference type="HAMAP-Rule" id="MF_00203"/>
    </source>
</evidence>
<keyword id="KW-0963">Cytoplasm</keyword>
<keyword id="KW-0227">DNA damage</keyword>
<keyword id="KW-0228">DNA excision</keyword>
<keyword id="KW-0234">DNA repair</keyword>
<keyword id="KW-0267">Excision nuclease</keyword>
<keyword id="KW-0742">SOS response</keyword>
<reference key="1">
    <citation type="journal article" date="2009" name="Genome Biol.">
        <title>Genomic and genetic analyses of diversity and plant interactions of Pseudomonas fluorescens.</title>
        <authorList>
            <person name="Silby M.W."/>
            <person name="Cerdeno-Tarraga A.M."/>
            <person name="Vernikos G.S."/>
            <person name="Giddens S.R."/>
            <person name="Jackson R.W."/>
            <person name="Preston G.M."/>
            <person name="Zhang X.-X."/>
            <person name="Moon C.D."/>
            <person name="Gehrig S.M."/>
            <person name="Godfrey S.A.C."/>
            <person name="Knight C.G."/>
            <person name="Malone J.G."/>
            <person name="Robinson Z."/>
            <person name="Spiers A.J."/>
            <person name="Harris S."/>
            <person name="Challis G.L."/>
            <person name="Yaxley A.M."/>
            <person name="Harris D."/>
            <person name="Seeger K."/>
            <person name="Murphy L."/>
            <person name="Rutter S."/>
            <person name="Squares R."/>
            <person name="Quail M.A."/>
            <person name="Saunders E."/>
            <person name="Mavromatis K."/>
            <person name="Brettin T.S."/>
            <person name="Bentley S.D."/>
            <person name="Hothersall J."/>
            <person name="Stephens E."/>
            <person name="Thomas C.M."/>
            <person name="Parkhill J."/>
            <person name="Levy S.B."/>
            <person name="Rainey P.B."/>
            <person name="Thomson N.R."/>
        </authorList>
    </citation>
    <scope>NUCLEOTIDE SEQUENCE [LARGE SCALE GENOMIC DNA]</scope>
    <source>
        <strain>SBW25</strain>
    </source>
</reference>
<sequence>MTTPFDPSAFLSTCSGRPGVYRMFDSEARLLYVGKAKNLKNRLASYFRKSGLAPKTAALVARIAQVETTITANETEALLLEQTLIKEWRPPYNILLRDDKSYPYVFLSDGNFPRLSIHRGAKKQKGKYFGPYPSAGAIRESLSLLQKTFFVRQCEDSFYKNRTRPCLQYQIKRCKAPCVGLVDPAEYAEDVRHSVMFLEGRSNALTDELSGAMEQAASTLDFERAAELRDQISLLRRVQDQQSMEGGTGDVDVIAAFVNPGGACVHLISVRGGRVLGSKNFFPQTGIDEEVAEVMAAFLGQYYVSSPERDLPSELIVNVVHEDFPTLIEAIHELRGRELDISHRVRGTRARWQQLAVTNAEQALGARLANRQHVAARFDALAEVLNLDEPPQRLECYDISHSSGEATVASCVVFGPEGPIKSDYRRYNIEGVTAGDDYAAMHQALTRRFSKLKDGEGKLPDILLVDGGKGQLSMARDVLNELAVPDLILLGVAKGATRKAGFETLYLNDSAHEFTLKGDSPALHLIQQIRDEAHRFAITGHRARRGKTRRTSTLEGVAGVGPTRRRDLLKHFGGLQELSRASIDEIAKAPGISKKLAELIYANLHSE</sequence>
<accession>C3K7T2</accession>
<dbReference type="EMBL" id="AM181176">
    <property type="protein sequence ID" value="CAY48428.1"/>
    <property type="molecule type" value="Genomic_DNA"/>
</dbReference>
<dbReference type="RefSeq" id="WP_012723426.1">
    <property type="nucleotide sequence ID" value="NC_012660.1"/>
</dbReference>
<dbReference type="SMR" id="C3K7T2"/>
<dbReference type="STRING" id="294.SRM1_02905"/>
<dbReference type="PATRIC" id="fig|216595.4.peg.2405"/>
<dbReference type="eggNOG" id="COG0322">
    <property type="taxonomic scope" value="Bacteria"/>
</dbReference>
<dbReference type="HOGENOM" id="CLU_014841_3_0_6"/>
<dbReference type="OrthoDB" id="9804933at2"/>
<dbReference type="GO" id="GO:0005737">
    <property type="term" value="C:cytoplasm"/>
    <property type="evidence" value="ECO:0007669"/>
    <property type="project" value="UniProtKB-SubCell"/>
</dbReference>
<dbReference type="GO" id="GO:0009380">
    <property type="term" value="C:excinuclease repair complex"/>
    <property type="evidence" value="ECO:0007669"/>
    <property type="project" value="InterPro"/>
</dbReference>
<dbReference type="GO" id="GO:0003677">
    <property type="term" value="F:DNA binding"/>
    <property type="evidence" value="ECO:0007669"/>
    <property type="project" value="UniProtKB-UniRule"/>
</dbReference>
<dbReference type="GO" id="GO:0009381">
    <property type="term" value="F:excinuclease ABC activity"/>
    <property type="evidence" value="ECO:0007669"/>
    <property type="project" value="UniProtKB-UniRule"/>
</dbReference>
<dbReference type="GO" id="GO:0006289">
    <property type="term" value="P:nucleotide-excision repair"/>
    <property type="evidence" value="ECO:0007669"/>
    <property type="project" value="UniProtKB-UniRule"/>
</dbReference>
<dbReference type="GO" id="GO:0009432">
    <property type="term" value="P:SOS response"/>
    <property type="evidence" value="ECO:0007669"/>
    <property type="project" value="UniProtKB-UniRule"/>
</dbReference>
<dbReference type="CDD" id="cd10434">
    <property type="entry name" value="GIY-YIG_UvrC_Cho"/>
    <property type="match status" value="1"/>
</dbReference>
<dbReference type="FunFam" id="1.10.150.20:FF:000005">
    <property type="entry name" value="UvrABC system protein C"/>
    <property type="match status" value="1"/>
</dbReference>
<dbReference type="FunFam" id="3.30.420.340:FF:000001">
    <property type="entry name" value="UvrABC system protein C"/>
    <property type="match status" value="1"/>
</dbReference>
<dbReference type="FunFam" id="3.40.1440.10:FF:000001">
    <property type="entry name" value="UvrABC system protein C"/>
    <property type="match status" value="1"/>
</dbReference>
<dbReference type="Gene3D" id="1.10.150.20">
    <property type="entry name" value="5' to 3' exonuclease, C-terminal subdomain"/>
    <property type="match status" value="1"/>
</dbReference>
<dbReference type="Gene3D" id="3.40.1440.10">
    <property type="entry name" value="GIY-YIG endonuclease"/>
    <property type="match status" value="1"/>
</dbReference>
<dbReference type="Gene3D" id="4.10.860.10">
    <property type="entry name" value="UVR domain"/>
    <property type="match status" value="1"/>
</dbReference>
<dbReference type="Gene3D" id="3.30.420.340">
    <property type="entry name" value="UvrC, RNAse H endonuclease domain"/>
    <property type="match status" value="1"/>
</dbReference>
<dbReference type="HAMAP" id="MF_00203">
    <property type="entry name" value="UvrC"/>
    <property type="match status" value="1"/>
</dbReference>
<dbReference type="InterPro" id="IPR000305">
    <property type="entry name" value="GIY-YIG_endonuc"/>
</dbReference>
<dbReference type="InterPro" id="IPR035901">
    <property type="entry name" value="GIY-YIG_endonuc_sf"/>
</dbReference>
<dbReference type="InterPro" id="IPR047296">
    <property type="entry name" value="GIY-YIG_UvrC_Cho"/>
</dbReference>
<dbReference type="InterPro" id="IPR003583">
    <property type="entry name" value="Hlx-hairpin-Hlx_DNA-bd_motif"/>
</dbReference>
<dbReference type="InterPro" id="IPR010994">
    <property type="entry name" value="RuvA_2-like"/>
</dbReference>
<dbReference type="InterPro" id="IPR001943">
    <property type="entry name" value="UVR_dom"/>
</dbReference>
<dbReference type="InterPro" id="IPR036876">
    <property type="entry name" value="UVR_dom_sf"/>
</dbReference>
<dbReference type="InterPro" id="IPR050066">
    <property type="entry name" value="UvrABC_protein_C"/>
</dbReference>
<dbReference type="InterPro" id="IPR004791">
    <property type="entry name" value="UvrC"/>
</dbReference>
<dbReference type="InterPro" id="IPR001162">
    <property type="entry name" value="UvrC_RNase_H_dom"/>
</dbReference>
<dbReference type="InterPro" id="IPR038476">
    <property type="entry name" value="UvrC_RNase_H_dom_sf"/>
</dbReference>
<dbReference type="NCBIfam" id="NF001824">
    <property type="entry name" value="PRK00558.1-5"/>
    <property type="match status" value="1"/>
</dbReference>
<dbReference type="NCBIfam" id="TIGR00194">
    <property type="entry name" value="uvrC"/>
    <property type="match status" value="1"/>
</dbReference>
<dbReference type="PANTHER" id="PTHR30562:SF1">
    <property type="entry name" value="UVRABC SYSTEM PROTEIN C"/>
    <property type="match status" value="1"/>
</dbReference>
<dbReference type="PANTHER" id="PTHR30562">
    <property type="entry name" value="UVRC/OXIDOREDUCTASE"/>
    <property type="match status" value="1"/>
</dbReference>
<dbReference type="Pfam" id="PF01541">
    <property type="entry name" value="GIY-YIG"/>
    <property type="match status" value="1"/>
</dbReference>
<dbReference type="Pfam" id="PF14520">
    <property type="entry name" value="HHH_5"/>
    <property type="match status" value="1"/>
</dbReference>
<dbReference type="Pfam" id="PF02151">
    <property type="entry name" value="UVR"/>
    <property type="match status" value="1"/>
</dbReference>
<dbReference type="Pfam" id="PF22920">
    <property type="entry name" value="UvrC_RNaseH"/>
    <property type="match status" value="1"/>
</dbReference>
<dbReference type="Pfam" id="PF08459">
    <property type="entry name" value="UvrC_RNaseH_dom"/>
    <property type="match status" value="1"/>
</dbReference>
<dbReference type="SMART" id="SM00465">
    <property type="entry name" value="GIYc"/>
    <property type="match status" value="1"/>
</dbReference>
<dbReference type="SMART" id="SM00278">
    <property type="entry name" value="HhH1"/>
    <property type="match status" value="2"/>
</dbReference>
<dbReference type="SUPFAM" id="SSF46600">
    <property type="entry name" value="C-terminal UvrC-binding domain of UvrB"/>
    <property type="match status" value="1"/>
</dbReference>
<dbReference type="SUPFAM" id="SSF82771">
    <property type="entry name" value="GIY-YIG endonuclease"/>
    <property type="match status" value="1"/>
</dbReference>
<dbReference type="SUPFAM" id="SSF47781">
    <property type="entry name" value="RuvA domain 2-like"/>
    <property type="match status" value="1"/>
</dbReference>
<dbReference type="PROSITE" id="PS50164">
    <property type="entry name" value="GIY_YIG"/>
    <property type="match status" value="1"/>
</dbReference>
<dbReference type="PROSITE" id="PS50151">
    <property type="entry name" value="UVR"/>
    <property type="match status" value="1"/>
</dbReference>
<dbReference type="PROSITE" id="PS50165">
    <property type="entry name" value="UVRC"/>
    <property type="match status" value="1"/>
</dbReference>
<gene>
    <name evidence="1" type="primary">uvrC</name>
    <name type="ordered locus">PFLU_2190</name>
</gene>
<protein>
    <recommendedName>
        <fullName evidence="1">UvrABC system protein C</fullName>
        <shortName evidence="1">Protein UvrC</shortName>
    </recommendedName>
    <alternativeName>
        <fullName evidence="1">Excinuclease ABC subunit C</fullName>
    </alternativeName>
</protein>
<organism>
    <name type="scientific">Pseudomonas fluorescens (strain SBW25)</name>
    <dbReference type="NCBI Taxonomy" id="216595"/>
    <lineage>
        <taxon>Bacteria</taxon>
        <taxon>Pseudomonadati</taxon>
        <taxon>Pseudomonadota</taxon>
        <taxon>Gammaproteobacteria</taxon>
        <taxon>Pseudomonadales</taxon>
        <taxon>Pseudomonadaceae</taxon>
        <taxon>Pseudomonas</taxon>
    </lineage>
</organism>
<feature type="chain" id="PRO_1000204124" description="UvrABC system protein C">
    <location>
        <begin position="1"/>
        <end position="607"/>
    </location>
</feature>
<feature type="domain" description="GIY-YIG" evidence="1">
    <location>
        <begin position="16"/>
        <end position="94"/>
    </location>
</feature>
<feature type="domain" description="UVR" evidence="1">
    <location>
        <begin position="203"/>
        <end position="238"/>
    </location>
</feature>